<sequence length="612" mass="67581">MGNVCIGPRRNFAKNGLLGILRPRHAAPSSPSQPTTTSRSIPVVLPSAPSSKPPPPTQTAPPVPVVISEPPPPQPQPEPQPAAPSQPPPPQEQPSPPPPASSNTTQQPPPPQQRQQSRAKKPAHIKRISSAGLQVESVLRRKTENLKDKYSLGRKLGQGQFGTTYLCVDKANGGEYACKSIAKRKLLTDEDVEDVRREIQIMHHLAGHPNIISIRGAYEDAVAVHVVMELCAGGELFDRIVRKGHYTERQAAGLARVIVAVVESCHSLGVMHRDLKPENFLFVGNEEDAPLKTIDFGLSMFFRPGEVFTDVVGSPYYVAPEVLKKSYGQEADVWSAGVIIYILLCGVPPFWAETEQGIFEQVLHGTLDFESDPWPNVSDGAKDLLRKVLVRDPKKRLTAHEVLCHPWLQMSGSAPDKPLDSAVLSRLRQFSAMNKLKKMALRVIAENLSEEEIAGLKEMFKMMDTDNSGQINYEELKAGLERVGANMKESEIYQLMQAADIDNSGTIDYGEFIAATLHLNKVEREDHLYAAFQYFDKDGSGYITSDELQQACDEFGIEDVRLEDMIGEVDQDNDGRIDYNEFVAMMQKTTTGFGKKGGHNFSGFRDALKSHS</sequence>
<name>CDPKR_ORYSJ</name>
<evidence type="ECO:0000250" key="1">
    <source>
        <dbReference type="UniProtKB" id="Q06850"/>
    </source>
</evidence>
<evidence type="ECO:0000255" key="2"/>
<evidence type="ECO:0000255" key="3">
    <source>
        <dbReference type="PROSITE-ProRule" id="PRU00159"/>
    </source>
</evidence>
<evidence type="ECO:0000255" key="4">
    <source>
        <dbReference type="PROSITE-ProRule" id="PRU00448"/>
    </source>
</evidence>
<evidence type="ECO:0000256" key="5">
    <source>
        <dbReference type="SAM" id="MobiDB-lite"/>
    </source>
</evidence>
<evidence type="ECO:0000303" key="6">
    <source>
    </source>
</evidence>
<evidence type="ECO:0000305" key="7"/>
<evidence type="ECO:0000312" key="8">
    <source>
        <dbReference type="EMBL" id="ABA98539.1"/>
    </source>
</evidence>
<evidence type="ECO:0000312" key="9">
    <source>
        <dbReference type="EMBL" id="BAF29805.1"/>
    </source>
</evidence>
<evidence type="ECO:0000312" key="10">
    <source>
        <dbReference type="EMBL" id="EAZ20507.1"/>
    </source>
</evidence>
<comment type="function">
    <text evidence="1">May play a role in signal transduction pathways that involve calcium as a second messenger.</text>
</comment>
<comment type="catalytic activity">
    <reaction evidence="7">
        <text>L-seryl-[protein] + ATP = O-phospho-L-seryl-[protein] + ADP + H(+)</text>
        <dbReference type="Rhea" id="RHEA:17989"/>
        <dbReference type="Rhea" id="RHEA-COMP:9863"/>
        <dbReference type="Rhea" id="RHEA-COMP:11604"/>
        <dbReference type="ChEBI" id="CHEBI:15378"/>
        <dbReference type="ChEBI" id="CHEBI:29999"/>
        <dbReference type="ChEBI" id="CHEBI:30616"/>
        <dbReference type="ChEBI" id="CHEBI:83421"/>
        <dbReference type="ChEBI" id="CHEBI:456216"/>
        <dbReference type="EC" id="2.7.11.1"/>
    </reaction>
</comment>
<comment type="catalytic activity">
    <reaction evidence="7">
        <text>L-threonyl-[protein] + ATP = O-phospho-L-threonyl-[protein] + ADP + H(+)</text>
        <dbReference type="Rhea" id="RHEA:46608"/>
        <dbReference type="Rhea" id="RHEA-COMP:11060"/>
        <dbReference type="Rhea" id="RHEA-COMP:11605"/>
        <dbReference type="ChEBI" id="CHEBI:15378"/>
        <dbReference type="ChEBI" id="CHEBI:30013"/>
        <dbReference type="ChEBI" id="CHEBI:30616"/>
        <dbReference type="ChEBI" id="CHEBI:61977"/>
        <dbReference type="ChEBI" id="CHEBI:456216"/>
        <dbReference type="EC" id="2.7.11.1"/>
    </reaction>
</comment>
<comment type="activity regulation">
    <text evidence="1">Activated by calcium. Autophosphorylation may play an important role in the regulation of the kinase activity.</text>
</comment>
<comment type="subcellular location">
    <subcellularLocation>
        <location evidence="7">Membrane</location>
        <topology evidence="7">Lipid-anchor</topology>
    </subcellularLocation>
</comment>
<comment type="domain">
    <text evidence="1">There are 3 contiguous domains conserved in the CDPK subfamily: a kinase domain, an autoinhibitory (junction) domain and a calmodulin-like domain. The autoinhibitory domain (414-444) inactivates kinase activity under calcium-free conditions.</text>
</comment>
<comment type="similarity">
    <text evidence="7">Belongs to the protein kinase superfamily. Ser/Thr protein kinase family. CDPK subfamily.</text>
</comment>
<comment type="sequence caution" evidence="7">
    <conflict type="erroneous gene model prediction">
        <sequence resource="EMBL-CDS" id="BAT17175"/>
    </conflict>
</comment>
<feature type="initiator methionine" description="Removed" evidence="2">
    <location>
        <position position="1"/>
    </location>
</feature>
<feature type="chain" id="PRO_0000437569" description="Calcium-dependent protein kinase 27">
    <location>
        <begin position="2"/>
        <end position="612"/>
    </location>
</feature>
<feature type="domain" description="Protein kinase" evidence="3">
    <location>
        <begin position="150"/>
        <end position="408"/>
    </location>
</feature>
<feature type="domain" description="EF-hand 1" evidence="4">
    <location>
        <begin position="451"/>
        <end position="486"/>
    </location>
</feature>
<feature type="domain" description="EF-hand 2" evidence="4">
    <location>
        <begin position="487"/>
        <end position="522"/>
    </location>
</feature>
<feature type="domain" description="EF-hand 3" evidence="4">
    <location>
        <begin position="523"/>
        <end position="558"/>
    </location>
</feature>
<feature type="domain" description="EF-hand 4" evidence="4">
    <location>
        <begin position="561"/>
        <end position="592"/>
    </location>
</feature>
<feature type="region of interest" description="Disordered" evidence="5">
    <location>
        <begin position="23"/>
        <end position="132"/>
    </location>
</feature>
<feature type="region of interest" description="Autoinhibitory domain" evidence="1">
    <location>
        <begin position="414"/>
        <end position="444"/>
    </location>
</feature>
<feature type="compositionally biased region" description="Low complexity" evidence="5">
    <location>
        <begin position="28"/>
        <end position="50"/>
    </location>
</feature>
<feature type="compositionally biased region" description="Pro residues" evidence="5">
    <location>
        <begin position="51"/>
        <end position="100"/>
    </location>
</feature>
<feature type="compositionally biased region" description="Basic residues" evidence="5">
    <location>
        <begin position="117"/>
        <end position="127"/>
    </location>
</feature>
<feature type="active site" description="Proton acceptor" evidence="3">
    <location>
        <position position="274"/>
    </location>
</feature>
<feature type="binding site" evidence="3">
    <location>
        <begin position="156"/>
        <end position="164"/>
    </location>
    <ligand>
        <name>ATP</name>
        <dbReference type="ChEBI" id="CHEBI:30616"/>
    </ligand>
</feature>
<feature type="binding site" evidence="3">
    <location>
        <position position="179"/>
    </location>
    <ligand>
        <name>ATP</name>
        <dbReference type="ChEBI" id="CHEBI:30616"/>
    </ligand>
</feature>
<feature type="binding site" evidence="4">
    <location>
        <position position="464"/>
    </location>
    <ligand>
        <name>Ca(2+)</name>
        <dbReference type="ChEBI" id="CHEBI:29108"/>
        <label>1</label>
    </ligand>
</feature>
<feature type="binding site" evidence="4">
    <location>
        <position position="466"/>
    </location>
    <ligand>
        <name>Ca(2+)</name>
        <dbReference type="ChEBI" id="CHEBI:29108"/>
        <label>1</label>
    </ligand>
</feature>
<feature type="binding site" evidence="4">
    <location>
        <position position="468"/>
    </location>
    <ligand>
        <name>Ca(2+)</name>
        <dbReference type="ChEBI" id="CHEBI:29108"/>
        <label>1</label>
    </ligand>
</feature>
<feature type="binding site" evidence="4">
    <location>
        <position position="470"/>
    </location>
    <ligand>
        <name>Ca(2+)</name>
        <dbReference type="ChEBI" id="CHEBI:29108"/>
        <label>1</label>
    </ligand>
</feature>
<feature type="binding site" evidence="4">
    <location>
        <position position="475"/>
    </location>
    <ligand>
        <name>Ca(2+)</name>
        <dbReference type="ChEBI" id="CHEBI:29108"/>
        <label>1</label>
    </ligand>
</feature>
<feature type="binding site" evidence="4">
    <location>
        <position position="500"/>
    </location>
    <ligand>
        <name>Ca(2+)</name>
        <dbReference type="ChEBI" id="CHEBI:29108"/>
        <label>2</label>
    </ligand>
</feature>
<feature type="binding site" evidence="4">
    <location>
        <position position="502"/>
    </location>
    <ligand>
        <name>Ca(2+)</name>
        <dbReference type="ChEBI" id="CHEBI:29108"/>
        <label>2</label>
    </ligand>
</feature>
<feature type="binding site" evidence="4">
    <location>
        <position position="504"/>
    </location>
    <ligand>
        <name>Ca(2+)</name>
        <dbReference type="ChEBI" id="CHEBI:29108"/>
        <label>2</label>
    </ligand>
</feature>
<feature type="binding site" evidence="4">
    <location>
        <position position="506"/>
    </location>
    <ligand>
        <name>Ca(2+)</name>
        <dbReference type="ChEBI" id="CHEBI:29108"/>
        <label>2</label>
    </ligand>
</feature>
<feature type="binding site" evidence="4">
    <location>
        <position position="511"/>
    </location>
    <ligand>
        <name>Ca(2+)</name>
        <dbReference type="ChEBI" id="CHEBI:29108"/>
        <label>2</label>
    </ligand>
</feature>
<feature type="binding site" evidence="4">
    <location>
        <position position="536"/>
    </location>
    <ligand>
        <name>Ca(2+)</name>
        <dbReference type="ChEBI" id="CHEBI:29108"/>
        <label>3</label>
    </ligand>
</feature>
<feature type="binding site" evidence="4">
    <location>
        <position position="538"/>
    </location>
    <ligand>
        <name>Ca(2+)</name>
        <dbReference type="ChEBI" id="CHEBI:29108"/>
        <label>3</label>
    </ligand>
</feature>
<feature type="binding site" evidence="4">
    <location>
        <position position="540"/>
    </location>
    <ligand>
        <name>Ca(2+)</name>
        <dbReference type="ChEBI" id="CHEBI:29108"/>
        <label>3</label>
    </ligand>
</feature>
<feature type="binding site" evidence="4">
    <location>
        <position position="542"/>
    </location>
    <ligand>
        <name>Ca(2+)</name>
        <dbReference type="ChEBI" id="CHEBI:29108"/>
        <label>3</label>
    </ligand>
</feature>
<feature type="binding site" evidence="4">
    <location>
        <position position="547"/>
    </location>
    <ligand>
        <name>Ca(2+)</name>
        <dbReference type="ChEBI" id="CHEBI:29108"/>
        <label>3</label>
    </ligand>
</feature>
<feature type="binding site" evidence="4">
    <location>
        <position position="570"/>
    </location>
    <ligand>
        <name>Ca(2+)</name>
        <dbReference type="ChEBI" id="CHEBI:29108"/>
        <label>4</label>
    </ligand>
</feature>
<feature type="binding site" evidence="4">
    <location>
        <position position="572"/>
    </location>
    <ligand>
        <name>Ca(2+)</name>
        <dbReference type="ChEBI" id="CHEBI:29108"/>
        <label>4</label>
    </ligand>
</feature>
<feature type="binding site" evidence="4">
    <location>
        <position position="574"/>
    </location>
    <ligand>
        <name>Ca(2+)</name>
        <dbReference type="ChEBI" id="CHEBI:29108"/>
        <label>4</label>
    </ligand>
</feature>
<feature type="binding site" evidence="4">
    <location>
        <position position="576"/>
    </location>
    <ligand>
        <name>Ca(2+)</name>
        <dbReference type="ChEBI" id="CHEBI:29108"/>
        <label>4</label>
    </ligand>
</feature>
<feature type="binding site" evidence="4">
    <location>
        <position position="581"/>
    </location>
    <ligand>
        <name>Ca(2+)</name>
        <dbReference type="ChEBI" id="CHEBI:29108"/>
        <label>4</label>
    </ligand>
</feature>
<feature type="lipid moiety-binding region" description="N-myristoyl glycine" evidence="2">
    <location>
        <position position="2"/>
    </location>
</feature>
<feature type="sequence conflict" description="In Ref. 5; EAZ20507." evidence="7" ref="5">
    <original>PPPPASSN</original>
    <variation>APRAASLK</variation>
    <location>
        <begin position="96"/>
        <end position="103"/>
    </location>
</feature>
<gene>
    <name evidence="6" type="primary">CPK27</name>
    <name evidence="9" type="ordered locus">Os12g0486600</name>
    <name evidence="8" type="ordered locus">LOC_Os12g30150</name>
    <name evidence="10" type="ORF">OsJ_36113</name>
</gene>
<organism>
    <name type="scientific">Oryza sativa subsp. japonica</name>
    <name type="common">Rice</name>
    <dbReference type="NCBI Taxonomy" id="39947"/>
    <lineage>
        <taxon>Eukaryota</taxon>
        <taxon>Viridiplantae</taxon>
        <taxon>Streptophyta</taxon>
        <taxon>Embryophyta</taxon>
        <taxon>Tracheophyta</taxon>
        <taxon>Spermatophyta</taxon>
        <taxon>Magnoliopsida</taxon>
        <taxon>Liliopsida</taxon>
        <taxon>Poales</taxon>
        <taxon>Poaceae</taxon>
        <taxon>BOP clade</taxon>
        <taxon>Oryzoideae</taxon>
        <taxon>Oryzeae</taxon>
        <taxon>Oryzinae</taxon>
        <taxon>Oryza</taxon>
        <taxon>Oryza sativa</taxon>
    </lineage>
</organism>
<accession>Q2QQR2</accession>
<accession>A0A0P0YAV7</accession>
<accession>A3CHE4</accession>
<dbReference type="EC" id="2.7.11.1" evidence="7"/>
<dbReference type="EMBL" id="DP000011">
    <property type="protein sequence ID" value="ABA98539.1"/>
    <property type="molecule type" value="Genomic_DNA"/>
</dbReference>
<dbReference type="EMBL" id="AP008218">
    <property type="protein sequence ID" value="BAF29805.1"/>
    <property type="molecule type" value="Genomic_DNA"/>
</dbReference>
<dbReference type="EMBL" id="AP014968">
    <property type="protein sequence ID" value="BAT17175.1"/>
    <property type="status" value="ALT_SEQ"/>
    <property type="molecule type" value="Genomic_DNA"/>
</dbReference>
<dbReference type="EMBL" id="CM000149">
    <property type="protein sequence ID" value="EAZ20507.1"/>
    <property type="molecule type" value="Genomic_DNA"/>
</dbReference>
<dbReference type="SMR" id="Q2QQR2"/>
<dbReference type="FunCoup" id="Q2QQR2">
    <property type="interactions" value="1606"/>
</dbReference>
<dbReference type="STRING" id="39947.Q2QQR2"/>
<dbReference type="PaxDb" id="39947-Q2QQR2"/>
<dbReference type="KEGG" id="dosa:Os12g0486600"/>
<dbReference type="InParanoid" id="Q2QQR2"/>
<dbReference type="OrthoDB" id="40902at2759"/>
<dbReference type="Proteomes" id="UP000000763">
    <property type="component" value="Chromosome 12"/>
</dbReference>
<dbReference type="Proteomes" id="UP000007752">
    <property type="component" value="Chromosome 12"/>
</dbReference>
<dbReference type="Proteomes" id="UP000059680">
    <property type="component" value="Chromosome 12"/>
</dbReference>
<dbReference type="GO" id="GO:0005737">
    <property type="term" value="C:cytoplasm"/>
    <property type="evidence" value="ECO:0000318"/>
    <property type="project" value="GO_Central"/>
</dbReference>
<dbReference type="GO" id="GO:0016020">
    <property type="term" value="C:membrane"/>
    <property type="evidence" value="ECO:0007669"/>
    <property type="project" value="UniProtKB-SubCell"/>
</dbReference>
<dbReference type="GO" id="GO:0005634">
    <property type="term" value="C:nucleus"/>
    <property type="evidence" value="ECO:0000318"/>
    <property type="project" value="GO_Central"/>
</dbReference>
<dbReference type="GO" id="GO:0005524">
    <property type="term" value="F:ATP binding"/>
    <property type="evidence" value="ECO:0007669"/>
    <property type="project" value="UniProtKB-KW"/>
</dbReference>
<dbReference type="GO" id="GO:0005509">
    <property type="term" value="F:calcium ion binding"/>
    <property type="evidence" value="ECO:0007669"/>
    <property type="project" value="InterPro"/>
</dbReference>
<dbReference type="GO" id="GO:0009931">
    <property type="term" value="F:calcium-dependent protein serine/threonine kinase activity"/>
    <property type="evidence" value="ECO:0000318"/>
    <property type="project" value="GO_Central"/>
</dbReference>
<dbReference type="GO" id="GO:0004683">
    <property type="term" value="F:calcium/calmodulin-dependent protein kinase activity"/>
    <property type="evidence" value="ECO:0000318"/>
    <property type="project" value="GO_Central"/>
</dbReference>
<dbReference type="GO" id="GO:0005516">
    <property type="term" value="F:calmodulin binding"/>
    <property type="evidence" value="ECO:0000318"/>
    <property type="project" value="GO_Central"/>
</dbReference>
<dbReference type="GO" id="GO:0106310">
    <property type="term" value="F:protein serine kinase activity"/>
    <property type="evidence" value="ECO:0007669"/>
    <property type="project" value="RHEA"/>
</dbReference>
<dbReference type="GO" id="GO:0035556">
    <property type="term" value="P:intracellular signal transduction"/>
    <property type="evidence" value="ECO:0000318"/>
    <property type="project" value="GO_Central"/>
</dbReference>
<dbReference type="CDD" id="cd00051">
    <property type="entry name" value="EFh"/>
    <property type="match status" value="2"/>
</dbReference>
<dbReference type="CDD" id="cd05117">
    <property type="entry name" value="STKc_CAMK"/>
    <property type="match status" value="1"/>
</dbReference>
<dbReference type="FunFam" id="1.10.238.10:FF:000015">
    <property type="entry name" value="Calcium-dependent protein kinase 1"/>
    <property type="match status" value="1"/>
</dbReference>
<dbReference type="FunFam" id="3.30.200.20:FF:000004">
    <property type="entry name" value="Calcium-dependent protein kinase 1"/>
    <property type="match status" value="1"/>
</dbReference>
<dbReference type="FunFam" id="1.10.510.10:FF:001864">
    <property type="entry name" value="Calcium-dependent protein kinase SK5"/>
    <property type="match status" value="1"/>
</dbReference>
<dbReference type="FunFam" id="1.10.510.10:FF:001294">
    <property type="entry name" value="CDPK-related kinase 3"/>
    <property type="match status" value="1"/>
</dbReference>
<dbReference type="Gene3D" id="1.10.238.10">
    <property type="entry name" value="EF-hand"/>
    <property type="match status" value="1"/>
</dbReference>
<dbReference type="Gene3D" id="3.30.200.20">
    <property type="entry name" value="Phosphorylase Kinase, domain 1"/>
    <property type="match status" value="1"/>
</dbReference>
<dbReference type="Gene3D" id="1.10.510.10">
    <property type="entry name" value="Transferase(Phosphotransferase) domain 1"/>
    <property type="match status" value="1"/>
</dbReference>
<dbReference type="InterPro" id="IPR050205">
    <property type="entry name" value="CDPK_Ser/Thr_kinases"/>
</dbReference>
<dbReference type="InterPro" id="IPR011992">
    <property type="entry name" value="EF-hand-dom_pair"/>
</dbReference>
<dbReference type="InterPro" id="IPR018247">
    <property type="entry name" value="EF_Hand_1_Ca_BS"/>
</dbReference>
<dbReference type="InterPro" id="IPR002048">
    <property type="entry name" value="EF_hand_dom"/>
</dbReference>
<dbReference type="InterPro" id="IPR011009">
    <property type="entry name" value="Kinase-like_dom_sf"/>
</dbReference>
<dbReference type="InterPro" id="IPR000719">
    <property type="entry name" value="Prot_kinase_dom"/>
</dbReference>
<dbReference type="InterPro" id="IPR017441">
    <property type="entry name" value="Protein_kinase_ATP_BS"/>
</dbReference>
<dbReference type="InterPro" id="IPR008271">
    <property type="entry name" value="Ser/Thr_kinase_AS"/>
</dbReference>
<dbReference type="PANTHER" id="PTHR24349">
    <property type="entry name" value="SERINE/THREONINE-PROTEIN KINASE"/>
    <property type="match status" value="1"/>
</dbReference>
<dbReference type="Pfam" id="PF13499">
    <property type="entry name" value="EF-hand_7"/>
    <property type="match status" value="2"/>
</dbReference>
<dbReference type="Pfam" id="PF00069">
    <property type="entry name" value="Pkinase"/>
    <property type="match status" value="1"/>
</dbReference>
<dbReference type="PRINTS" id="PR01217">
    <property type="entry name" value="PRICHEXTENSN"/>
</dbReference>
<dbReference type="SMART" id="SM00054">
    <property type="entry name" value="EFh"/>
    <property type="match status" value="4"/>
</dbReference>
<dbReference type="SMART" id="SM00220">
    <property type="entry name" value="S_TKc"/>
    <property type="match status" value="1"/>
</dbReference>
<dbReference type="SUPFAM" id="SSF47473">
    <property type="entry name" value="EF-hand"/>
    <property type="match status" value="1"/>
</dbReference>
<dbReference type="SUPFAM" id="SSF56112">
    <property type="entry name" value="Protein kinase-like (PK-like)"/>
    <property type="match status" value="1"/>
</dbReference>
<dbReference type="PROSITE" id="PS00018">
    <property type="entry name" value="EF_HAND_1"/>
    <property type="match status" value="4"/>
</dbReference>
<dbReference type="PROSITE" id="PS50222">
    <property type="entry name" value="EF_HAND_2"/>
    <property type="match status" value="4"/>
</dbReference>
<dbReference type="PROSITE" id="PS00107">
    <property type="entry name" value="PROTEIN_KINASE_ATP"/>
    <property type="match status" value="1"/>
</dbReference>
<dbReference type="PROSITE" id="PS50011">
    <property type="entry name" value="PROTEIN_KINASE_DOM"/>
    <property type="match status" value="1"/>
</dbReference>
<dbReference type="PROSITE" id="PS00108">
    <property type="entry name" value="PROTEIN_KINASE_ST"/>
    <property type="match status" value="1"/>
</dbReference>
<protein>
    <recommendedName>
        <fullName evidence="7">Calcium-dependent protein kinase 27</fullName>
        <shortName evidence="7">OsCDPK27</shortName>
        <shortName evidence="6">OsCPK27</shortName>
        <ecNumber evidence="7">2.7.11.1</ecNumber>
    </recommendedName>
</protein>
<keyword id="KW-0067">ATP-binding</keyword>
<keyword id="KW-0106">Calcium</keyword>
<keyword id="KW-0418">Kinase</keyword>
<keyword id="KW-0449">Lipoprotein</keyword>
<keyword id="KW-0472">Membrane</keyword>
<keyword id="KW-0479">Metal-binding</keyword>
<keyword id="KW-0519">Myristate</keyword>
<keyword id="KW-0547">Nucleotide-binding</keyword>
<keyword id="KW-1185">Reference proteome</keyword>
<keyword id="KW-0677">Repeat</keyword>
<keyword id="KW-0723">Serine/threonine-protein kinase</keyword>
<keyword id="KW-0808">Transferase</keyword>
<proteinExistence type="inferred from homology"/>
<reference key="1">
    <citation type="journal article" date="2005" name="BMC Biol.">
        <title>The sequence of rice chromosomes 11 and 12, rich in disease resistance genes and recent gene duplications.</title>
        <authorList>
            <consortium name="The rice chromosomes 11 and 12 sequencing consortia"/>
        </authorList>
    </citation>
    <scope>NUCLEOTIDE SEQUENCE [LARGE SCALE GENOMIC DNA]</scope>
    <source>
        <strain>cv. Nipponbare</strain>
    </source>
</reference>
<reference key="2">
    <citation type="journal article" date="2005" name="Nature">
        <title>The map-based sequence of the rice genome.</title>
        <authorList>
            <consortium name="International rice genome sequencing project (IRGSP)"/>
        </authorList>
    </citation>
    <scope>NUCLEOTIDE SEQUENCE [LARGE SCALE GENOMIC DNA]</scope>
    <source>
        <strain>cv. Nipponbare</strain>
    </source>
</reference>
<reference key="3">
    <citation type="journal article" date="2008" name="Nucleic Acids Res.">
        <title>The rice annotation project database (RAP-DB): 2008 update.</title>
        <authorList>
            <consortium name="The rice annotation project (RAP)"/>
        </authorList>
    </citation>
    <scope>GENOME REANNOTATION</scope>
    <source>
        <strain>cv. Nipponbare</strain>
    </source>
</reference>
<reference key="4">
    <citation type="journal article" date="2013" name="Rice">
        <title>Improvement of the Oryza sativa Nipponbare reference genome using next generation sequence and optical map data.</title>
        <authorList>
            <person name="Kawahara Y."/>
            <person name="de la Bastide M."/>
            <person name="Hamilton J.P."/>
            <person name="Kanamori H."/>
            <person name="McCombie W.R."/>
            <person name="Ouyang S."/>
            <person name="Schwartz D.C."/>
            <person name="Tanaka T."/>
            <person name="Wu J."/>
            <person name="Zhou S."/>
            <person name="Childs K.L."/>
            <person name="Davidson R.M."/>
            <person name="Lin H."/>
            <person name="Quesada-Ocampo L."/>
            <person name="Vaillancourt B."/>
            <person name="Sakai H."/>
            <person name="Lee S.S."/>
            <person name="Kim J."/>
            <person name="Numa H."/>
            <person name="Itoh T."/>
            <person name="Buell C.R."/>
            <person name="Matsumoto T."/>
        </authorList>
    </citation>
    <scope>GENOME REANNOTATION</scope>
    <source>
        <strain>cv. Nipponbare</strain>
    </source>
</reference>
<reference key="5">
    <citation type="journal article" date="2005" name="PLoS Biol.">
        <title>The genomes of Oryza sativa: a history of duplications.</title>
        <authorList>
            <person name="Yu J."/>
            <person name="Wang J."/>
            <person name="Lin W."/>
            <person name="Li S."/>
            <person name="Li H."/>
            <person name="Zhou J."/>
            <person name="Ni P."/>
            <person name="Dong W."/>
            <person name="Hu S."/>
            <person name="Zeng C."/>
            <person name="Zhang J."/>
            <person name="Zhang Y."/>
            <person name="Li R."/>
            <person name="Xu Z."/>
            <person name="Li S."/>
            <person name="Li X."/>
            <person name="Zheng H."/>
            <person name="Cong L."/>
            <person name="Lin L."/>
            <person name="Yin J."/>
            <person name="Geng J."/>
            <person name="Li G."/>
            <person name="Shi J."/>
            <person name="Liu J."/>
            <person name="Lv H."/>
            <person name="Li J."/>
            <person name="Wang J."/>
            <person name="Deng Y."/>
            <person name="Ran L."/>
            <person name="Shi X."/>
            <person name="Wang X."/>
            <person name="Wu Q."/>
            <person name="Li C."/>
            <person name="Ren X."/>
            <person name="Wang J."/>
            <person name="Wang X."/>
            <person name="Li D."/>
            <person name="Liu D."/>
            <person name="Zhang X."/>
            <person name="Ji Z."/>
            <person name="Zhao W."/>
            <person name="Sun Y."/>
            <person name="Zhang Z."/>
            <person name="Bao J."/>
            <person name="Han Y."/>
            <person name="Dong L."/>
            <person name="Ji J."/>
            <person name="Chen P."/>
            <person name="Wu S."/>
            <person name="Liu J."/>
            <person name="Xiao Y."/>
            <person name="Bu D."/>
            <person name="Tan J."/>
            <person name="Yang L."/>
            <person name="Ye C."/>
            <person name="Zhang J."/>
            <person name="Xu J."/>
            <person name="Zhou Y."/>
            <person name="Yu Y."/>
            <person name="Zhang B."/>
            <person name="Zhuang S."/>
            <person name="Wei H."/>
            <person name="Liu B."/>
            <person name="Lei M."/>
            <person name="Yu H."/>
            <person name="Li Y."/>
            <person name="Xu H."/>
            <person name="Wei S."/>
            <person name="He X."/>
            <person name="Fang L."/>
            <person name="Zhang Z."/>
            <person name="Zhang Y."/>
            <person name="Huang X."/>
            <person name="Su Z."/>
            <person name="Tong W."/>
            <person name="Li J."/>
            <person name="Tong Z."/>
            <person name="Li S."/>
            <person name="Ye J."/>
            <person name="Wang L."/>
            <person name="Fang L."/>
            <person name="Lei T."/>
            <person name="Chen C.-S."/>
            <person name="Chen H.-C."/>
            <person name="Xu Z."/>
            <person name="Li H."/>
            <person name="Huang H."/>
            <person name="Zhang F."/>
            <person name="Xu H."/>
            <person name="Li N."/>
            <person name="Zhao C."/>
            <person name="Li S."/>
            <person name="Dong L."/>
            <person name="Huang Y."/>
            <person name="Li L."/>
            <person name="Xi Y."/>
            <person name="Qi Q."/>
            <person name="Li W."/>
            <person name="Zhang B."/>
            <person name="Hu W."/>
            <person name="Zhang Y."/>
            <person name="Tian X."/>
            <person name="Jiao Y."/>
            <person name="Liang X."/>
            <person name="Jin J."/>
            <person name="Gao L."/>
            <person name="Zheng W."/>
            <person name="Hao B."/>
            <person name="Liu S.-M."/>
            <person name="Wang W."/>
            <person name="Yuan L."/>
            <person name="Cao M."/>
            <person name="McDermott J."/>
            <person name="Samudrala R."/>
            <person name="Wang J."/>
            <person name="Wong G.K.-S."/>
            <person name="Yang H."/>
        </authorList>
    </citation>
    <scope>NUCLEOTIDE SEQUENCE [LARGE SCALE GENOMIC DNA]</scope>
    <source>
        <strain>cv. Nipponbare</strain>
    </source>
</reference>
<reference key="6">
    <citation type="journal article" date="2005" name="Plant Cell Physiol.">
        <title>Genome-wide identification of the rice calcium-dependent protein kinase and its closely related kinase gene families: comprehensive analysis of the CDPKs gene family in rice.</title>
        <authorList>
            <person name="Asano T."/>
            <person name="Tanaka N."/>
            <person name="Yang G."/>
            <person name="Hayashi N."/>
            <person name="Komatsu S."/>
        </authorList>
    </citation>
    <scope>GENE FAMILY</scope>
    <scope>NOMENCLATURE</scope>
</reference>